<proteinExistence type="inferred from homology"/>
<organism>
    <name type="scientific">Escherichia coli (strain K12 / DH10B)</name>
    <dbReference type="NCBI Taxonomy" id="316385"/>
    <lineage>
        <taxon>Bacteria</taxon>
        <taxon>Pseudomonadati</taxon>
        <taxon>Pseudomonadota</taxon>
        <taxon>Gammaproteobacteria</taxon>
        <taxon>Enterobacterales</taxon>
        <taxon>Enterobacteriaceae</taxon>
        <taxon>Escherichia</taxon>
    </lineage>
</organism>
<gene>
    <name evidence="1" type="primary">mraY</name>
    <name type="ordered locus">ECDH10B_0069</name>
</gene>
<name>MRAY_ECODH</name>
<protein>
    <recommendedName>
        <fullName evidence="1">Phospho-N-acetylmuramoyl-pentapeptide-transferase</fullName>
        <ecNumber evidence="1">2.7.8.13</ecNumber>
    </recommendedName>
    <alternativeName>
        <fullName evidence="1">UDP-MurNAc-pentapeptide phosphotransferase</fullName>
    </alternativeName>
</protein>
<feature type="chain" id="PRO_1000090624" description="Phospho-N-acetylmuramoyl-pentapeptide-transferase">
    <location>
        <begin position="1"/>
        <end position="360"/>
    </location>
</feature>
<feature type="topological domain" description="Periplasmic" evidence="1">
    <location>
        <begin position="1"/>
        <end position="25"/>
    </location>
</feature>
<feature type="transmembrane region" description="Helical" evidence="1">
    <location>
        <begin position="26"/>
        <end position="46"/>
    </location>
</feature>
<feature type="topological domain" description="Cytoplasmic" evidence="1">
    <location>
        <begin position="47"/>
        <end position="71"/>
    </location>
</feature>
<feature type="transmembrane region" description="Helical" evidence="1">
    <location>
        <begin position="72"/>
        <end position="92"/>
    </location>
</feature>
<feature type="topological domain" description="Periplasmic" evidence="1">
    <location>
        <position position="93"/>
    </location>
</feature>
<feature type="transmembrane region" description="Helical" evidence="1">
    <location>
        <begin position="94"/>
        <end position="114"/>
    </location>
</feature>
<feature type="topological domain" description="Cytoplasmic" evidence="1">
    <location>
        <begin position="115"/>
        <end position="131"/>
    </location>
</feature>
<feature type="transmembrane region" description="Helical" evidence="1">
    <location>
        <begin position="132"/>
        <end position="152"/>
    </location>
</feature>
<feature type="topological domain" description="Periplasmic" evidence="1">
    <location>
        <begin position="153"/>
        <end position="167"/>
    </location>
</feature>
<feature type="transmembrane region" description="Helical" evidence="1">
    <location>
        <begin position="168"/>
        <end position="188"/>
    </location>
</feature>
<feature type="topological domain" description="Cytoplasmic" evidence="1">
    <location>
        <begin position="189"/>
        <end position="198"/>
    </location>
</feature>
<feature type="transmembrane region" description="Helical" evidence="1">
    <location>
        <begin position="199"/>
        <end position="219"/>
    </location>
</feature>
<feature type="topological domain" description="Periplasmic" evidence="1">
    <location>
        <begin position="220"/>
        <end position="235"/>
    </location>
</feature>
<feature type="transmembrane region" description="Helical" evidence="1">
    <location>
        <begin position="236"/>
        <end position="256"/>
    </location>
</feature>
<feature type="topological domain" description="Cytoplasmic" evidence="1">
    <location>
        <begin position="257"/>
        <end position="262"/>
    </location>
</feature>
<feature type="transmembrane region" description="Helical" evidence="1">
    <location>
        <begin position="263"/>
        <end position="283"/>
    </location>
</feature>
<feature type="topological domain" description="Periplasmic" evidence="1">
    <location>
        <begin position="284"/>
        <end position="287"/>
    </location>
</feature>
<feature type="transmembrane region" description="Helical" evidence="1">
    <location>
        <begin position="288"/>
        <end position="308"/>
    </location>
</feature>
<feature type="topological domain" description="Cytoplasmic" evidence="1">
    <location>
        <begin position="309"/>
        <end position="337"/>
    </location>
</feature>
<feature type="transmembrane region" description="Helical" evidence="1">
    <location>
        <begin position="338"/>
        <end position="358"/>
    </location>
</feature>
<feature type="topological domain" description="Periplasmic" evidence="1">
    <location>
        <begin position="359"/>
        <end position="360"/>
    </location>
</feature>
<comment type="function">
    <text evidence="1">Catalyzes the initial step of the lipid cycle reactions in the biosynthesis of the cell wall peptidoglycan: transfers peptidoglycan precursor phospho-MurNAc-pentapeptide from UDP-MurNAc-pentapeptide onto the lipid carrier undecaprenyl phosphate, yielding undecaprenyl-pyrophosphoryl-MurNAc-pentapeptide, known as lipid I.</text>
</comment>
<comment type="catalytic activity">
    <reaction evidence="1">
        <text>UDP-N-acetyl-alpha-D-muramoyl-L-alanyl-gamma-D-glutamyl-meso-2,6-diaminopimeloyl-D-alanyl-D-alanine + di-trans,octa-cis-undecaprenyl phosphate = di-trans,octa-cis-undecaprenyl diphospho-N-acetyl-alpha-D-muramoyl-L-alanyl-D-glutamyl-meso-2,6-diaminopimeloyl-D-alanyl-D-alanine + UMP</text>
        <dbReference type="Rhea" id="RHEA:28386"/>
        <dbReference type="ChEBI" id="CHEBI:57865"/>
        <dbReference type="ChEBI" id="CHEBI:60392"/>
        <dbReference type="ChEBI" id="CHEBI:61386"/>
        <dbReference type="ChEBI" id="CHEBI:61387"/>
        <dbReference type="EC" id="2.7.8.13"/>
    </reaction>
</comment>
<comment type="cofactor">
    <cofactor evidence="1">
        <name>Mg(2+)</name>
        <dbReference type="ChEBI" id="CHEBI:18420"/>
    </cofactor>
</comment>
<comment type="pathway">
    <text evidence="1">Cell wall biogenesis; peptidoglycan biosynthesis.</text>
</comment>
<comment type="subcellular location">
    <subcellularLocation>
        <location evidence="1">Cell inner membrane</location>
        <topology evidence="1">Multi-pass membrane protein</topology>
    </subcellularLocation>
</comment>
<comment type="similarity">
    <text evidence="1">Belongs to the glycosyltransferase 4 family. MraY subfamily.</text>
</comment>
<keyword id="KW-0131">Cell cycle</keyword>
<keyword id="KW-0132">Cell division</keyword>
<keyword id="KW-0997">Cell inner membrane</keyword>
<keyword id="KW-1003">Cell membrane</keyword>
<keyword id="KW-0133">Cell shape</keyword>
<keyword id="KW-0961">Cell wall biogenesis/degradation</keyword>
<keyword id="KW-0460">Magnesium</keyword>
<keyword id="KW-0472">Membrane</keyword>
<keyword id="KW-0479">Metal-binding</keyword>
<keyword id="KW-0573">Peptidoglycan synthesis</keyword>
<keyword id="KW-0808">Transferase</keyword>
<keyword id="KW-0812">Transmembrane</keyword>
<keyword id="KW-1133">Transmembrane helix</keyword>
<sequence length="360" mass="39875">MLVWLAEHLVKYYSGFNVFSYLTFRAIVSLLTALFISLWMGPRMIAHLQKLSFGQVVRNDGPESHFSKRGTPTMGGIMILTAIVISVLLWAYPSNPYVWCVLVVLVGYGVIGFVDDYRKVVRKDTKGLIARWKYFWMSVIALGVAFALYLAGKDTPATQLVVPFFKDVMPQLGLFYILLAYFVIVGTGNAVNLTDGLDGLAIMPTVFVAGGFALVAWATGNMNFASYLHIPYLRHAGELVIVCTAIVGAGLGFLWFNTYPAQVFMGDVGSLALGGALGIIAVLLRQEFLLVIMGGVFVVETLSVILQVGSFKLRGQRIFRMAPIHHHYELKGWPEPRVIVRFWIISLMLVLIGLATLKVR</sequence>
<accession>B1XC64</accession>
<reference key="1">
    <citation type="journal article" date="2008" name="J. Bacteriol.">
        <title>The complete genome sequence of Escherichia coli DH10B: insights into the biology of a laboratory workhorse.</title>
        <authorList>
            <person name="Durfee T."/>
            <person name="Nelson R."/>
            <person name="Baldwin S."/>
            <person name="Plunkett G. III"/>
            <person name="Burland V."/>
            <person name="Mau B."/>
            <person name="Petrosino J.F."/>
            <person name="Qin X."/>
            <person name="Muzny D.M."/>
            <person name="Ayele M."/>
            <person name="Gibbs R.A."/>
            <person name="Csorgo B."/>
            <person name="Posfai G."/>
            <person name="Weinstock G.M."/>
            <person name="Blattner F.R."/>
        </authorList>
    </citation>
    <scope>NUCLEOTIDE SEQUENCE [LARGE SCALE GENOMIC DNA]</scope>
    <source>
        <strain>K12 / DH10B</strain>
    </source>
</reference>
<evidence type="ECO:0000255" key="1">
    <source>
        <dbReference type="HAMAP-Rule" id="MF_00038"/>
    </source>
</evidence>
<dbReference type="EC" id="2.7.8.13" evidence="1"/>
<dbReference type="EMBL" id="CP000948">
    <property type="protein sequence ID" value="ACB01268.1"/>
    <property type="molecule type" value="Genomic_DNA"/>
</dbReference>
<dbReference type="RefSeq" id="WP_000964131.1">
    <property type="nucleotide sequence ID" value="NC_010473.1"/>
</dbReference>
<dbReference type="SMR" id="B1XC64"/>
<dbReference type="GeneID" id="93777347"/>
<dbReference type="KEGG" id="ecd:ECDH10B_0069"/>
<dbReference type="HOGENOM" id="CLU_023982_0_0_6"/>
<dbReference type="UniPathway" id="UPA00219"/>
<dbReference type="GO" id="GO:0005886">
    <property type="term" value="C:plasma membrane"/>
    <property type="evidence" value="ECO:0007669"/>
    <property type="project" value="UniProtKB-SubCell"/>
</dbReference>
<dbReference type="GO" id="GO:0046872">
    <property type="term" value="F:metal ion binding"/>
    <property type="evidence" value="ECO:0007669"/>
    <property type="project" value="UniProtKB-KW"/>
</dbReference>
<dbReference type="GO" id="GO:0008963">
    <property type="term" value="F:phospho-N-acetylmuramoyl-pentapeptide-transferase activity"/>
    <property type="evidence" value="ECO:0007669"/>
    <property type="project" value="UniProtKB-UniRule"/>
</dbReference>
<dbReference type="GO" id="GO:0051992">
    <property type="term" value="F:UDP-N-acetylmuramoyl-L-alanyl-D-glutamyl-meso-2,6-diaminopimelyl-D-alanyl-D-alanine:undecaprenyl-phosphate transferase activity"/>
    <property type="evidence" value="ECO:0007669"/>
    <property type="project" value="RHEA"/>
</dbReference>
<dbReference type="GO" id="GO:0051301">
    <property type="term" value="P:cell division"/>
    <property type="evidence" value="ECO:0007669"/>
    <property type="project" value="UniProtKB-KW"/>
</dbReference>
<dbReference type="GO" id="GO:0071555">
    <property type="term" value="P:cell wall organization"/>
    <property type="evidence" value="ECO:0007669"/>
    <property type="project" value="UniProtKB-KW"/>
</dbReference>
<dbReference type="GO" id="GO:0009252">
    <property type="term" value="P:peptidoglycan biosynthetic process"/>
    <property type="evidence" value="ECO:0007669"/>
    <property type="project" value="UniProtKB-UniRule"/>
</dbReference>
<dbReference type="GO" id="GO:0008360">
    <property type="term" value="P:regulation of cell shape"/>
    <property type="evidence" value="ECO:0007669"/>
    <property type="project" value="UniProtKB-KW"/>
</dbReference>
<dbReference type="CDD" id="cd06852">
    <property type="entry name" value="GT_MraY"/>
    <property type="match status" value="1"/>
</dbReference>
<dbReference type="HAMAP" id="MF_00038">
    <property type="entry name" value="MraY"/>
    <property type="match status" value="1"/>
</dbReference>
<dbReference type="InterPro" id="IPR000715">
    <property type="entry name" value="Glycosyl_transferase_4"/>
</dbReference>
<dbReference type="InterPro" id="IPR003524">
    <property type="entry name" value="PNAcMuramoyl-5peptid_Trfase"/>
</dbReference>
<dbReference type="InterPro" id="IPR018480">
    <property type="entry name" value="PNAcMuramoyl-5peptid_Trfase_CS"/>
</dbReference>
<dbReference type="NCBIfam" id="TIGR00445">
    <property type="entry name" value="mraY"/>
    <property type="match status" value="1"/>
</dbReference>
<dbReference type="PANTHER" id="PTHR22926">
    <property type="entry name" value="PHOSPHO-N-ACETYLMURAMOYL-PENTAPEPTIDE-TRANSFERASE"/>
    <property type="match status" value="1"/>
</dbReference>
<dbReference type="PANTHER" id="PTHR22926:SF5">
    <property type="entry name" value="PHOSPHO-N-ACETYLMURAMOYL-PENTAPEPTIDE-TRANSFERASE HOMOLOG"/>
    <property type="match status" value="1"/>
</dbReference>
<dbReference type="Pfam" id="PF00953">
    <property type="entry name" value="Glycos_transf_4"/>
    <property type="match status" value="1"/>
</dbReference>
<dbReference type="Pfam" id="PF10555">
    <property type="entry name" value="MraY_sig1"/>
    <property type="match status" value="1"/>
</dbReference>
<dbReference type="PROSITE" id="PS01347">
    <property type="entry name" value="MRAY_1"/>
    <property type="match status" value="1"/>
</dbReference>
<dbReference type="PROSITE" id="PS01348">
    <property type="entry name" value="MRAY_2"/>
    <property type="match status" value="1"/>
</dbReference>